<gene>
    <name evidence="1" type="primary">engB</name>
    <name type="ordered locus">A1G_00800</name>
</gene>
<proteinExistence type="inferred from homology"/>
<comment type="function">
    <text evidence="1">Necessary for normal cell division and for the maintenance of normal septation.</text>
</comment>
<comment type="cofactor">
    <cofactor evidence="1">
        <name>Mg(2+)</name>
        <dbReference type="ChEBI" id="CHEBI:18420"/>
    </cofactor>
</comment>
<comment type="similarity">
    <text evidence="1">Belongs to the TRAFAC class TrmE-Era-EngA-EngB-Septin-like GTPase superfamily. EngB GTPase family.</text>
</comment>
<sequence length="212" mass="23875">MTTQKIVPTKSTDGSKLFRHQAKFVAGAMNINQIPNFSLPEIAFVGKSNVGKSSLINTICNNKNLAKVSNTAGRTRQINFFNLADKLIIVDLPGYGFANVPISVKEQWGVLISYYLRNSYNLRLVNLLIDSRRGIKENDKKVADLLLANKREFQIIFTKSDKVTDHKNLHDEAQNFLATLNYSCNVMYVSNRSKEGARELKASLAKCIKFQK</sequence>
<dbReference type="EMBL" id="CP000848">
    <property type="protein sequence ID" value="ABV75746.1"/>
    <property type="molecule type" value="Genomic_DNA"/>
</dbReference>
<dbReference type="SMR" id="A8GQS1"/>
<dbReference type="GeneID" id="79936933"/>
<dbReference type="KEGG" id="rri:A1G_00800"/>
<dbReference type="HOGENOM" id="CLU_033732_2_0_5"/>
<dbReference type="Proteomes" id="UP000006832">
    <property type="component" value="Chromosome"/>
</dbReference>
<dbReference type="GO" id="GO:0005525">
    <property type="term" value="F:GTP binding"/>
    <property type="evidence" value="ECO:0007669"/>
    <property type="project" value="UniProtKB-UniRule"/>
</dbReference>
<dbReference type="GO" id="GO:0046872">
    <property type="term" value="F:metal ion binding"/>
    <property type="evidence" value="ECO:0007669"/>
    <property type="project" value="UniProtKB-KW"/>
</dbReference>
<dbReference type="GO" id="GO:0000917">
    <property type="term" value="P:division septum assembly"/>
    <property type="evidence" value="ECO:0007669"/>
    <property type="project" value="UniProtKB-KW"/>
</dbReference>
<dbReference type="CDD" id="cd01876">
    <property type="entry name" value="YihA_EngB"/>
    <property type="match status" value="1"/>
</dbReference>
<dbReference type="Gene3D" id="3.40.50.300">
    <property type="entry name" value="P-loop containing nucleotide triphosphate hydrolases"/>
    <property type="match status" value="1"/>
</dbReference>
<dbReference type="HAMAP" id="MF_00321">
    <property type="entry name" value="GTPase_EngB"/>
    <property type="match status" value="1"/>
</dbReference>
<dbReference type="InterPro" id="IPR030393">
    <property type="entry name" value="G_ENGB_dom"/>
</dbReference>
<dbReference type="InterPro" id="IPR006073">
    <property type="entry name" value="GTP-bd"/>
</dbReference>
<dbReference type="InterPro" id="IPR019987">
    <property type="entry name" value="GTP-bd_ribosome_bio_YsxC"/>
</dbReference>
<dbReference type="InterPro" id="IPR027417">
    <property type="entry name" value="P-loop_NTPase"/>
</dbReference>
<dbReference type="NCBIfam" id="TIGR03598">
    <property type="entry name" value="GTPase_YsxC"/>
    <property type="match status" value="1"/>
</dbReference>
<dbReference type="PANTHER" id="PTHR11649:SF13">
    <property type="entry name" value="ENGB-TYPE G DOMAIN-CONTAINING PROTEIN"/>
    <property type="match status" value="1"/>
</dbReference>
<dbReference type="PANTHER" id="PTHR11649">
    <property type="entry name" value="MSS1/TRME-RELATED GTP-BINDING PROTEIN"/>
    <property type="match status" value="1"/>
</dbReference>
<dbReference type="Pfam" id="PF01926">
    <property type="entry name" value="MMR_HSR1"/>
    <property type="match status" value="1"/>
</dbReference>
<dbReference type="SUPFAM" id="SSF52540">
    <property type="entry name" value="P-loop containing nucleoside triphosphate hydrolases"/>
    <property type="match status" value="1"/>
</dbReference>
<dbReference type="PROSITE" id="PS51706">
    <property type="entry name" value="G_ENGB"/>
    <property type="match status" value="1"/>
</dbReference>
<organism>
    <name type="scientific">Rickettsia rickettsii (strain Sheila Smith)</name>
    <dbReference type="NCBI Taxonomy" id="392021"/>
    <lineage>
        <taxon>Bacteria</taxon>
        <taxon>Pseudomonadati</taxon>
        <taxon>Pseudomonadota</taxon>
        <taxon>Alphaproteobacteria</taxon>
        <taxon>Rickettsiales</taxon>
        <taxon>Rickettsiaceae</taxon>
        <taxon>Rickettsieae</taxon>
        <taxon>Rickettsia</taxon>
        <taxon>spotted fever group</taxon>
    </lineage>
</organism>
<feature type="chain" id="PRO_1000005850" description="Probable GTP-binding protein EngB">
    <location>
        <begin position="1"/>
        <end position="212"/>
    </location>
</feature>
<feature type="domain" description="EngB-type G" evidence="1">
    <location>
        <begin position="38"/>
        <end position="210"/>
    </location>
</feature>
<feature type="binding site" evidence="1">
    <location>
        <begin position="46"/>
        <end position="53"/>
    </location>
    <ligand>
        <name>GTP</name>
        <dbReference type="ChEBI" id="CHEBI:37565"/>
    </ligand>
</feature>
<feature type="binding site" evidence="1">
    <location>
        <position position="53"/>
    </location>
    <ligand>
        <name>Mg(2+)</name>
        <dbReference type="ChEBI" id="CHEBI:18420"/>
    </ligand>
</feature>
<feature type="binding site" evidence="1">
    <location>
        <begin position="73"/>
        <end position="77"/>
    </location>
    <ligand>
        <name>GTP</name>
        <dbReference type="ChEBI" id="CHEBI:37565"/>
    </ligand>
</feature>
<feature type="binding site" evidence="1">
    <location>
        <position position="75"/>
    </location>
    <ligand>
        <name>Mg(2+)</name>
        <dbReference type="ChEBI" id="CHEBI:18420"/>
    </ligand>
</feature>
<feature type="binding site" evidence="1">
    <location>
        <begin position="91"/>
        <end position="94"/>
    </location>
    <ligand>
        <name>GTP</name>
        <dbReference type="ChEBI" id="CHEBI:37565"/>
    </ligand>
</feature>
<feature type="binding site" evidence="1">
    <location>
        <begin position="158"/>
        <end position="161"/>
    </location>
    <ligand>
        <name>GTP</name>
        <dbReference type="ChEBI" id="CHEBI:37565"/>
    </ligand>
</feature>
<feature type="binding site" evidence="1">
    <location>
        <begin position="189"/>
        <end position="191"/>
    </location>
    <ligand>
        <name>GTP</name>
        <dbReference type="ChEBI" id="CHEBI:37565"/>
    </ligand>
</feature>
<accession>A8GQS1</accession>
<protein>
    <recommendedName>
        <fullName evidence="1">Probable GTP-binding protein EngB</fullName>
    </recommendedName>
</protein>
<keyword id="KW-0131">Cell cycle</keyword>
<keyword id="KW-0132">Cell division</keyword>
<keyword id="KW-0342">GTP-binding</keyword>
<keyword id="KW-0460">Magnesium</keyword>
<keyword id="KW-0479">Metal-binding</keyword>
<keyword id="KW-0547">Nucleotide-binding</keyword>
<keyword id="KW-0717">Septation</keyword>
<name>ENGB_RICRS</name>
<evidence type="ECO:0000255" key="1">
    <source>
        <dbReference type="HAMAP-Rule" id="MF_00321"/>
    </source>
</evidence>
<reference key="1">
    <citation type="submission" date="2007-09" db="EMBL/GenBank/DDBJ databases">
        <title>Complete genome sequence of Rickettsia rickettsii.</title>
        <authorList>
            <person name="Madan A."/>
            <person name="Fahey J."/>
            <person name="Helton E."/>
            <person name="Ketteman M."/>
            <person name="Madan A."/>
            <person name="Rodrigues S."/>
            <person name="Sanchez A."/>
            <person name="Dasch G."/>
            <person name="Eremeeva M."/>
        </authorList>
    </citation>
    <scope>NUCLEOTIDE SEQUENCE [LARGE SCALE GENOMIC DNA]</scope>
    <source>
        <strain>Sheila Smith</strain>
    </source>
</reference>